<accession>P0A3T1</accession>
<accession>P04031</accession>
<proteinExistence type="predicted"/>
<comment type="function">
    <text>Involved in tumor formation and increases auxin and cytokinin effects in host plants.</text>
</comment>
<comment type="sequence caution" evidence="2">
    <conflict type="frameshift">
        <sequence resource="EMBL-CDS" id="CAA25172"/>
    </conflict>
</comment>
<gene>
    <name type="primary">6b</name>
</gene>
<feature type="chain" id="PRO_0000064396" description="Protein 6b">
    <location>
        <begin position="1"/>
        <end position="207"/>
    </location>
</feature>
<feature type="region of interest" description="Disordered" evidence="1">
    <location>
        <begin position="161"/>
        <end position="185"/>
    </location>
</feature>
<feature type="compositionally biased region" description="Acidic residues" evidence="1">
    <location>
        <begin position="164"/>
        <end position="178"/>
    </location>
</feature>
<protein>
    <recommendedName>
        <fullName>Protein 6b</fullName>
    </recommendedName>
</protein>
<geneLocation type="plasmid">
    <name>pTi15955</name>
</geneLocation>
<keyword id="KW-0192">Crown gall tumor</keyword>
<keyword id="KW-0614">Plasmid</keyword>
<dbReference type="EMBL" id="X00493">
    <property type="protein sequence ID" value="CAA25172.1"/>
    <property type="status" value="ALT_FRAME"/>
    <property type="molecule type" value="Genomic_DNA"/>
</dbReference>
<dbReference type="InterPro" id="IPR006064">
    <property type="entry name" value="Glycosidase"/>
</dbReference>
<dbReference type="Pfam" id="PF02027">
    <property type="entry name" value="RolB_RolC"/>
    <property type="match status" value="1"/>
</dbReference>
<name>6B1_AGRT9</name>
<sequence length="207" mass="23448">MTVANWQVRDLTLILRTGEMKSRLEQARTDFGALLSETVYFQPSAIRLGEFDDEYIHSRQELVYVYLREDIARQCALRRNLPSNSSNFGTMATAIPPWLMNARSLNRVMQERCDQGGLVNYYQGPHTNQFFLAIMPSNCFVRFGTDIINNENYGFXARRGNTLEEGEDDDDEMDDEGEAGGAEPRECQIGNLINYPIIALGSCDLSA</sequence>
<reference key="1">
    <citation type="journal article" date="1983" name="Plant Mol. Biol.">
        <title>Nucleotide sequence of the T-DNA region from the Agrobacterium tumefaciens octopine Ti plasmid pTi15955.</title>
        <authorList>
            <person name="Barker R.F."/>
            <person name="Idler K.B."/>
            <person name="Thompson D.V."/>
            <person name="Kemp J.D."/>
        </authorList>
        <dbReference type="AGRICOLA" id="IND84096335"/>
    </citation>
    <scope>NUCLEOTIDE SEQUENCE [GENOMIC DNA]</scope>
</reference>
<organism>
    <name type="scientific">Agrobacterium tumefaciens (strain 15955)</name>
    <dbReference type="NCBI Taxonomy" id="190386"/>
    <lineage>
        <taxon>Bacteria</taxon>
        <taxon>Pseudomonadati</taxon>
        <taxon>Pseudomonadota</taxon>
        <taxon>Alphaproteobacteria</taxon>
        <taxon>Hyphomicrobiales</taxon>
        <taxon>Rhizobiaceae</taxon>
        <taxon>Rhizobium/Agrobacterium group</taxon>
        <taxon>Agrobacterium</taxon>
        <taxon>Agrobacterium tumefaciens complex</taxon>
    </lineage>
</organism>
<evidence type="ECO:0000256" key="1">
    <source>
        <dbReference type="SAM" id="MobiDB-lite"/>
    </source>
</evidence>
<evidence type="ECO:0000305" key="2"/>